<comment type="similarity">
    <text evidence="2">Belongs to the LIX1 family.</text>
</comment>
<feature type="chain" id="PRO_0000232874" description="LIX1-like protein">
    <location>
        <begin position="1"/>
        <end position="338"/>
    </location>
</feature>
<feature type="region of interest" description="Disordered" evidence="1">
    <location>
        <begin position="1"/>
        <end position="65"/>
    </location>
</feature>
<feature type="compositionally biased region" description="Low complexity" evidence="1">
    <location>
        <begin position="29"/>
        <end position="38"/>
    </location>
</feature>
<feature type="compositionally biased region" description="Pro residues" evidence="1">
    <location>
        <begin position="39"/>
        <end position="56"/>
    </location>
</feature>
<reference key="1">
    <citation type="journal article" date="2004" name="Genome Res.">
        <title>The status, quality, and expansion of the NIH full-length cDNA project: the Mammalian Gene Collection (MGC).</title>
        <authorList>
            <consortium name="The MGC Project Team"/>
        </authorList>
    </citation>
    <scope>NUCLEOTIDE SEQUENCE [LARGE SCALE MRNA]</scope>
    <source>
        <tissue>Testis</tissue>
    </source>
</reference>
<proteinExistence type="evidence at transcript level"/>
<sequence>METMRAQRLQPGVGVGGRGTLRALRPGVTGAPTSAATPPAGPPPAPPPPAPPPPPLLLAGAPGLPLPPGATGSPAVLREAVEAVVRSFAKHTQGYGRAVNVVEALQEFWQMKQSRGADLKNGALVVYEMVPSNSPPYVCYVTLPGGSCFGSFQFCPTKAEARRSAAKIALMNSVFNEHPSRRITDEFIEKSVSEALASFNGNREEADNPNTGIGAFRFMLESNKGKSMLEFQELMTVFQLLHWNGSLKAMRERQCSRQEVLAHYSHRALDDDIRHQMALDWVSREQSVPGALSRELASTERELDEARLAGKELRFHKEKKDILMLAAGQLGNMHSSSC</sequence>
<accession>Q5PQQ7</accession>
<evidence type="ECO:0000256" key="1">
    <source>
        <dbReference type="SAM" id="MobiDB-lite"/>
    </source>
</evidence>
<evidence type="ECO:0000305" key="2"/>
<dbReference type="EMBL" id="BC087077">
    <property type="protein sequence ID" value="AAH87077.1"/>
    <property type="molecule type" value="mRNA"/>
</dbReference>
<dbReference type="RefSeq" id="NP_001019474.1">
    <property type="nucleotide sequence ID" value="NM_001024303.1"/>
</dbReference>
<dbReference type="FunCoup" id="Q5PQQ7">
    <property type="interactions" value="1372"/>
</dbReference>
<dbReference type="STRING" id="10116.ENSRNOP00000053080"/>
<dbReference type="GlyGen" id="Q5PQQ7">
    <property type="glycosylation" value="1 site"/>
</dbReference>
<dbReference type="iPTMnet" id="Q5PQQ7"/>
<dbReference type="PhosphoSitePlus" id="Q5PQQ7"/>
<dbReference type="PaxDb" id="10116-ENSRNOP00000053080"/>
<dbReference type="Ensembl" id="ENSRNOT00000056237.4">
    <property type="protein sequence ID" value="ENSRNOP00000053080.3"/>
    <property type="gene ID" value="ENSRNOG00000021213.7"/>
</dbReference>
<dbReference type="UCSC" id="RGD:1593161">
    <property type="organism name" value="rat"/>
</dbReference>
<dbReference type="AGR" id="RGD:1593161"/>
<dbReference type="RGD" id="1593161">
    <property type="gene designation" value="Lix1l"/>
</dbReference>
<dbReference type="eggNOG" id="ENOG502QR91">
    <property type="taxonomic scope" value="Eukaryota"/>
</dbReference>
<dbReference type="GeneTree" id="ENSGT00390000005869"/>
<dbReference type="HOGENOM" id="CLU_065651_0_1_1"/>
<dbReference type="InParanoid" id="Q5PQQ7"/>
<dbReference type="OMA" id="MDWVSRE"/>
<dbReference type="OrthoDB" id="6250996at2759"/>
<dbReference type="PhylomeDB" id="Q5PQQ7"/>
<dbReference type="PRO" id="PR:Q5PQQ7"/>
<dbReference type="Proteomes" id="UP000002494">
    <property type="component" value="Chromosome 2"/>
</dbReference>
<dbReference type="Bgee" id="ENSRNOG00000021213">
    <property type="expression patterns" value="Expressed in heart and 19 other cell types or tissues"/>
</dbReference>
<dbReference type="GO" id="GO:0005737">
    <property type="term" value="C:cytoplasm"/>
    <property type="evidence" value="ECO:0000318"/>
    <property type="project" value="GO_Central"/>
</dbReference>
<dbReference type="GO" id="GO:0097352">
    <property type="term" value="P:autophagosome maturation"/>
    <property type="evidence" value="ECO:0000318"/>
    <property type="project" value="GO_Central"/>
</dbReference>
<dbReference type="CDD" id="cd00048">
    <property type="entry name" value="DSRM_SF"/>
    <property type="match status" value="1"/>
</dbReference>
<dbReference type="InterPro" id="IPR051436">
    <property type="entry name" value="Autophagy-related_EPG5"/>
</dbReference>
<dbReference type="InterPro" id="IPR029270">
    <property type="entry name" value="LIX1"/>
</dbReference>
<dbReference type="PANTHER" id="PTHR31139">
    <property type="entry name" value="ECTOPIC P GRANULES PROTEIN 5 HOMOLOG"/>
    <property type="match status" value="1"/>
</dbReference>
<dbReference type="PANTHER" id="PTHR31139:SF6">
    <property type="entry name" value="PROTEIN LIMB EXPRESSION 1 HOMOLOG"/>
    <property type="match status" value="1"/>
</dbReference>
<dbReference type="Pfam" id="PF14954">
    <property type="entry name" value="LIX1"/>
    <property type="match status" value="1"/>
</dbReference>
<dbReference type="SUPFAM" id="SSF54768">
    <property type="entry name" value="dsRNA-binding domain-like"/>
    <property type="match status" value="1"/>
</dbReference>
<gene>
    <name type="primary">Lix1l</name>
</gene>
<keyword id="KW-1185">Reference proteome</keyword>
<protein>
    <recommendedName>
        <fullName>LIX1-like protein</fullName>
    </recommendedName>
</protein>
<name>LIX1L_RAT</name>
<organism>
    <name type="scientific">Rattus norvegicus</name>
    <name type="common">Rat</name>
    <dbReference type="NCBI Taxonomy" id="10116"/>
    <lineage>
        <taxon>Eukaryota</taxon>
        <taxon>Metazoa</taxon>
        <taxon>Chordata</taxon>
        <taxon>Craniata</taxon>
        <taxon>Vertebrata</taxon>
        <taxon>Euteleostomi</taxon>
        <taxon>Mammalia</taxon>
        <taxon>Eutheria</taxon>
        <taxon>Euarchontoglires</taxon>
        <taxon>Glires</taxon>
        <taxon>Rodentia</taxon>
        <taxon>Myomorpha</taxon>
        <taxon>Muroidea</taxon>
        <taxon>Muridae</taxon>
        <taxon>Murinae</taxon>
        <taxon>Rattus</taxon>
    </lineage>
</organism>